<accession>Q69B78</accession>
<keyword id="KW-0249">Electron transport</keyword>
<keyword id="KW-0472">Membrane</keyword>
<keyword id="KW-0496">Mitochondrion</keyword>
<keyword id="KW-0999">Mitochondrion inner membrane</keyword>
<keyword id="KW-0520">NAD</keyword>
<keyword id="KW-0679">Respiratory chain</keyword>
<keyword id="KW-1278">Translocase</keyword>
<keyword id="KW-0812">Transmembrane</keyword>
<keyword id="KW-1133">Transmembrane helix</keyword>
<keyword id="KW-0813">Transport</keyword>
<keyword id="KW-0830">Ubiquinone</keyword>
<sequence length="98" mass="10742">MTLIHMNIIMAFSMSLVGLLMYRSHLMSALLCLEGMMLSLFVLAALTILNSHFTLANMMPIILLVFAACEAAIGLALLVTISNTYGTDYVQNLNLLQC</sequence>
<protein>
    <recommendedName>
        <fullName>NADH-ubiquinone oxidoreductase chain 4L</fullName>
        <ecNumber>7.1.1.2</ecNumber>
    </recommendedName>
    <alternativeName>
        <fullName>NADH dehydrogenase subunit 4L</fullName>
    </alternativeName>
</protein>
<geneLocation type="mitochondrion"/>
<proteinExistence type="inferred from homology"/>
<name>NU4LM_EUBAS</name>
<dbReference type="EC" id="7.1.1.2"/>
<dbReference type="EMBL" id="AY398627">
    <property type="protein sequence ID" value="AAR33061.1"/>
    <property type="molecule type" value="Genomic_DNA"/>
</dbReference>
<dbReference type="EMBL" id="AP006473">
    <property type="protein sequence ID" value="BAD91767.1"/>
    <property type="molecule type" value="Genomic_DNA"/>
</dbReference>
<dbReference type="RefSeq" id="YP_220766.1">
    <property type="nucleotide sequence ID" value="NC_006930.1"/>
</dbReference>
<dbReference type="SMR" id="Q69B78"/>
<dbReference type="GeneID" id="3337247"/>
<dbReference type="CTD" id="4539"/>
<dbReference type="GO" id="GO:0005743">
    <property type="term" value="C:mitochondrial inner membrane"/>
    <property type="evidence" value="ECO:0000250"/>
    <property type="project" value="UniProtKB"/>
</dbReference>
<dbReference type="GO" id="GO:0045271">
    <property type="term" value="C:respiratory chain complex I"/>
    <property type="evidence" value="ECO:0000250"/>
    <property type="project" value="UniProtKB"/>
</dbReference>
<dbReference type="GO" id="GO:0008137">
    <property type="term" value="F:NADH dehydrogenase (ubiquinone) activity"/>
    <property type="evidence" value="ECO:0000250"/>
    <property type="project" value="UniProtKB"/>
</dbReference>
<dbReference type="GO" id="GO:0042773">
    <property type="term" value="P:ATP synthesis coupled electron transport"/>
    <property type="evidence" value="ECO:0007669"/>
    <property type="project" value="InterPro"/>
</dbReference>
<dbReference type="FunFam" id="1.10.287.3510:FF:000002">
    <property type="entry name" value="NADH-ubiquinone oxidoreductase chain 4L"/>
    <property type="match status" value="1"/>
</dbReference>
<dbReference type="Gene3D" id="1.10.287.3510">
    <property type="match status" value="1"/>
</dbReference>
<dbReference type="InterPro" id="IPR001133">
    <property type="entry name" value="NADH_UbQ_OxRdtase_chain4L/K"/>
</dbReference>
<dbReference type="InterPro" id="IPR039428">
    <property type="entry name" value="NUOK/Mnh_C1-like"/>
</dbReference>
<dbReference type="PANTHER" id="PTHR11434:SF0">
    <property type="entry name" value="NADH-UBIQUINONE OXIDOREDUCTASE CHAIN 4L"/>
    <property type="match status" value="1"/>
</dbReference>
<dbReference type="PANTHER" id="PTHR11434">
    <property type="entry name" value="NADH-UBIQUINONE OXIDOREDUCTASE SUBUNIT ND4L"/>
    <property type="match status" value="1"/>
</dbReference>
<dbReference type="Pfam" id="PF00420">
    <property type="entry name" value="Oxidored_q2"/>
    <property type="match status" value="1"/>
</dbReference>
<gene>
    <name type="primary">MT-ND4L</name>
    <name type="synonym">MTND4L</name>
    <name type="synonym">NADH4L</name>
    <name type="synonym">ND4L</name>
</gene>
<feature type="chain" id="PRO_0000275014" description="NADH-ubiquinone oxidoreductase chain 4L">
    <location>
        <begin position="1"/>
        <end position="98"/>
    </location>
</feature>
<feature type="transmembrane region" description="Helical" evidence="3">
    <location>
        <begin position="1"/>
        <end position="21"/>
    </location>
</feature>
<feature type="transmembrane region" description="Helical" evidence="3">
    <location>
        <begin position="29"/>
        <end position="49"/>
    </location>
</feature>
<feature type="transmembrane region" description="Helical" evidence="3">
    <location>
        <begin position="61"/>
        <end position="81"/>
    </location>
</feature>
<reference key="1">
    <citation type="journal article" date="2004" name="Mol. Phylogenet. Evol.">
        <title>Phylogeny of mysticete whales based on mitochondrial and nuclear data.</title>
        <authorList>
            <person name="Rychel A.L."/>
            <person name="Reeder T.W."/>
            <person name="Berta A."/>
        </authorList>
    </citation>
    <scope>NUCLEOTIDE SEQUENCE [GENOMIC DNA]</scope>
</reference>
<reference key="2">
    <citation type="journal article" date="2005" name="Syst. Biol.">
        <title>Mitochondrial phylogenetics and evolution of mysticete whales.</title>
        <authorList>
            <person name="Sasaki T."/>
            <person name="Nikaido M."/>
            <person name="Hamilton H."/>
            <person name="Goto M."/>
            <person name="Kato H."/>
            <person name="Kanda N."/>
            <person name="Pastene L.A."/>
            <person name="Cao Y."/>
            <person name="Fordyce R.E."/>
            <person name="Hasegawa M."/>
            <person name="Okada N."/>
        </authorList>
    </citation>
    <scope>NUCLEOTIDE SEQUENCE [GENOMIC DNA]</scope>
</reference>
<comment type="function">
    <text evidence="1">Core subunit of the mitochondrial membrane respiratory chain NADH dehydrogenase (Complex I) which catalyzes electron transfer from NADH through the respiratory chain, using ubiquinone as an electron acceptor. Part of the enzyme membrane arm which is embedded in the lipid bilayer and involved in proton translocation.</text>
</comment>
<comment type="catalytic activity">
    <reaction evidence="1">
        <text>a ubiquinone + NADH + 5 H(+)(in) = a ubiquinol + NAD(+) + 4 H(+)(out)</text>
        <dbReference type="Rhea" id="RHEA:29091"/>
        <dbReference type="Rhea" id="RHEA-COMP:9565"/>
        <dbReference type="Rhea" id="RHEA-COMP:9566"/>
        <dbReference type="ChEBI" id="CHEBI:15378"/>
        <dbReference type="ChEBI" id="CHEBI:16389"/>
        <dbReference type="ChEBI" id="CHEBI:17976"/>
        <dbReference type="ChEBI" id="CHEBI:57540"/>
        <dbReference type="ChEBI" id="CHEBI:57945"/>
        <dbReference type="EC" id="7.1.1.2"/>
    </reaction>
    <physiologicalReaction direction="left-to-right" evidence="1">
        <dbReference type="Rhea" id="RHEA:29092"/>
    </physiologicalReaction>
</comment>
<comment type="subunit">
    <text evidence="2">Core subunit of respiratory chain NADH dehydrogenase (Complex I) which is composed of 45 different subunits.</text>
</comment>
<comment type="subcellular location">
    <subcellularLocation>
        <location evidence="2">Mitochondrion inner membrane</location>
        <topology evidence="3">Multi-pass membrane protein</topology>
    </subcellularLocation>
</comment>
<comment type="similarity">
    <text evidence="4">Belongs to the complex I subunit 4L family.</text>
</comment>
<organism>
    <name type="scientific">Eubalaena australis</name>
    <name type="common">Southern right whale</name>
    <dbReference type="NCBI Taxonomy" id="160595"/>
    <lineage>
        <taxon>Eukaryota</taxon>
        <taxon>Metazoa</taxon>
        <taxon>Chordata</taxon>
        <taxon>Craniata</taxon>
        <taxon>Vertebrata</taxon>
        <taxon>Euteleostomi</taxon>
        <taxon>Mammalia</taxon>
        <taxon>Eutheria</taxon>
        <taxon>Laurasiatheria</taxon>
        <taxon>Artiodactyla</taxon>
        <taxon>Whippomorpha</taxon>
        <taxon>Cetacea</taxon>
        <taxon>Mysticeti</taxon>
        <taxon>Balaenidae</taxon>
        <taxon>Eubalaena</taxon>
    </lineage>
</organism>
<evidence type="ECO:0000250" key="1">
    <source>
        <dbReference type="UniProtKB" id="P03901"/>
    </source>
</evidence>
<evidence type="ECO:0000250" key="2">
    <source>
        <dbReference type="UniProtKB" id="P03902"/>
    </source>
</evidence>
<evidence type="ECO:0000255" key="3"/>
<evidence type="ECO:0000305" key="4"/>